<accession>B3DRX8</accession>
<organism>
    <name type="scientific">Bifidobacterium longum (strain DJO10A)</name>
    <dbReference type="NCBI Taxonomy" id="205913"/>
    <lineage>
        <taxon>Bacteria</taxon>
        <taxon>Bacillati</taxon>
        <taxon>Actinomycetota</taxon>
        <taxon>Actinomycetes</taxon>
        <taxon>Bifidobacteriales</taxon>
        <taxon>Bifidobacteriaceae</taxon>
        <taxon>Bifidobacterium</taxon>
    </lineage>
</organism>
<comment type="function">
    <text evidence="1">The RuvA-RuvB-RuvC complex processes Holliday junction (HJ) DNA during genetic recombination and DNA repair. Endonuclease that resolves HJ intermediates. Cleaves cruciform DNA by making single-stranded nicks across the HJ at symmetrical positions within the homologous arms, yielding a 5'-phosphate and a 3'-hydroxyl group; requires a central core of homology in the junction. The consensus cleavage sequence is 5'-(A/T)TT(C/G)-3'. Cleavage occurs on the 3'-side of the TT dinucleotide at the point of strand exchange. HJ branch migration catalyzed by RuvA-RuvB allows RuvC to scan DNA until it finds its consensus sequence, where it cleaves and resolves the cruciform DNA.</text>
</comment>
<comment type="catalytic activity">
    <reaction evidence="1">
        <text>Endonucleolytic cleavage at a junction such as a reciprocal single-stranded crossover between two homologous DNA duplexes (Holliday junction).</text>
        <dbReference type="EC" id="3.1.21.10"/>
    </reaction>
</comment>
<comment type="cofactor">
    <cofactor evidence="1">
        <name>Mg(2+)</name>
        <dbReference type="ChEBI" id="CHEBI:18420"/>
    </cofactor>
    <text evidence="1">Binds 2 Mg(2+) ion per subunit.</text>
</comment>
<comment type="subunit">
    <text evidence="1">Homodimer which binds Holliday junction (HJ) DNA. The HJ becomes 2-fold symmetrical on binding to RuvC with unstacked arms; it has a different conformation from HJ DNA in complex with RuvA. In the full resolvosome a probable DNA-RuvA(4)-RuvB(12)-RuvC(2) complex forms which resolves the HJ.</text>
</comment>
<comment type="subcellular location">
    <subcellularLocation>
        <location evidence="1">Cytoplasm</location>
    </subcellularLocation>
</comment>
<comment type="similarity">
    <text evidence="1">Belongs to the RuvC family.</text>
</comment>
<protein>
    <recommendedName>
        <fullName evidence="1">Crossover junction endodeoxyribonuclease RuvC</fullName>
        <ecNumber evidence="1">3.1.21.10</ecNumber>
    </recommendedName>
    <alternativeName>
        <fullName evidence="1">Holliday junction nuclease RuvC</fullName>
    </alternativeName>
    <alternativeName>
        <fullName evidence="1">Holliday junction resolvase RuvC</fullName>
    </alternativeName>
</protein>
<dbReference type="EC" id="3.1.21.10" evidence="1"/>
<dbReference type="EMBL" id="CP000605">
    <property type="protein sequence ID" value="ACD97897.1"/>
    <property type="molecule type" value="Genomic_DNA"/>
</dbReference>
<dbReference type="RefSeq" id="WP_007052856.1">
    <property type="nucleotide sequence ID" value="NZ_AABM02000001.1"/>
</dbReference>
<dbReference type="SMR" id="B3DRX8"/>
<dbReference type="KEGG" id="blj:BLD_0451"/>
<dbReference type="HOGENOM" id="CLU_091257_0_2_11"/>
<dbReference type="Proteomes" id="UP000002419">
    <property type="component" value="Chromosome"/>
</dbReference>
<dbReference type="GO" id="GO:0005737">
    <property type="term" value="C:cytoplasm"/>
    <property type="evidence" value="ECO:0007669"/>
    <property type="project" value="UniProtKB-SubCell"/>
</dbReference>
<dbReference type="GO" id="GO:0048476">
    <property type="term" value="C:Holliday junction resolvase complex"/>
    <property type="evidence" value="ECO:0007669"/>
    <property type="project" value="UniProtKB-UniRule"/>
</dbReference>
<dbReference type="GO" id="GO:0008821">
    <property type="term" value="F:crossover junction DNA endonuclease activity"/>
    <property type="evidence" value="ECO:0007669"/>
    <property type="project" value="UniProtKB-UniRule"/>
</dbReference>
<dbReference type="GO" id="GO:0003677">
    <property type="term" value="F:DNA binding"/>
    <property type="evidence" value="ECO:0007669"/>
    <property type="project" value="UniProtKB-KW"/>
</dbReference>
<dbReference type="GO" id="GO:0000287">
    <property type="term" value="F:magnesium ion binding"/>
    <property type="evidence" value="ECO:0007669"/>
    <property type="project" value="UniProtKB-UniRule"/>
</dbReference>
<dbReference type="GO" id="GO:0006310">
    <property type="term" value="P:DNA recombination"/>
    <property type="evidence" value="ECO:0007669"/>
    <property type="project" value="UniProtKB-UniRule"/>
</dbReference>
<dbReference type="GO" id="GO:0006281">
    <property type="term" value="P:DNA repair"/>
    <property type="evidence" value="ECO:0007669"/>
    <property type="project" value="UniProtKB-UniRule"/>
</dbReference>
<dbReference type="CDD" id="cd16962">
    <property type="entry name" value="RuvC"/>
    <property type="match status" value="1"/>
</dbReference>
<dbReference type="FunFam" id="3.30.420.10:FF:000002">
    <property type="entry name" value="Crossover junction endodeoxyribonuclease RuvC"/>
    <property type="match status" value="1"/>
</dbReference>
<dbReference type="Gene3D" id="3.30.420.10">
    <property type="entry name" value="Ribonuclease H-like superfamily/Ribonuclease H"/>
    <property type="match status" value="1"/>
</dbReference>
<dbReference type="HAMAP" id="MF_00034">
    <property type="entry name" value="RuvC"/>
    <property type="match status" value="1"/>
</dbReference>
<dbReference type="InterPro" id="IPR012337">
    <property type="entry name" value="RNaseH-like_sf"/>
</dbReference>
<dbReference type="InterPro" id="IPR036397">
    <property type="entry name" value="RNaseH_sf"/>
</dbReference>
<dbReference type="InterPro" id="IPR020563">
    <property type="entry name" value="X-over_junc_endoDNase_Mg_BS"/>
</dbReference>
<dbReference type="InterPro" id="IPR002176">
    <property type="entry name" value="X-over_junc_endoDNase_RuvC"/>
</dbReference>
<dbReference type="NCBIfam" id="TIGR00228">
    <property type="entry name" value="ruvC"/>
    <property type="match status" value="1"/>
</dbReference>
<dbReference type="PANTHER" id="PTHR30194">
    <property type="entry name" value="CROSSOVER JUNCTION ENDODEOXYRIBONUCLEASE RUVC"/>
    <property type="match status" value="1"/>
</dbReference>
<dbReference type="PANTHER" id="PTHR30194:SF3">
    <property type="entry name" value="CROSSOVER JUNCTION ENDODEOXYRIBONUCLEASE RUVC"/>
    <property type="match status" value="1"/>
</dbReference>
<dbReference type="Pfam" id="PF02075">
    <property type="entry name" value="RuvC"/>
    <property type="match status" value="1"/>
</dbReference>
<dbReference type="PRINTS" id="PR00696">
    <property type="entry name" value="RSOLVASERUVC"/>
</dbReference>
<dbReference type="SUPFAM" id="SSF53098">
    <property type="entry name" value="Ribonuclease H-like"/>
    <property type="match status" value="1"/>
</dbReference>
<dbReference type="PROSITE" id="PS01321">
    <property type="entry name" value="RUVC"/>
    <property type="match status" value="1"/>
</dbReference>
<gene>
    <name evidence="1" type="primary">ruvC</name>
    <name type="ordered locus">BLD_0451</name>
</gene>
<proteinExistence type="inferred from homology"/>
<reference key="1">
    <citation type="journal article" date="2008" name="BMC Genomics">
        <title>Comparative genomic analysis of the gut bacterium Bifidobacterium longum reveals loci susceptible to deletion during pure culture growth.</title>
        <authorList>
            <person name="Lee J.H."/>
            <person name="Karamychev V.N."/>
            <person name="Kozyavkin S.A."/>
            <person name="Mills D."/>
            <person name="Pavlov A.R."/>
            <person name="Pavlova N.V."/>
            <person name="Polouchine N.N."/>
            <person name="Richardson P.M."/>
            <person name="Shakhova V.V."/>
            <person name="Slesarev A.I."/>
            <person name="Weimer B."/>
            <person name="O'Sullivan D.J."/>
        </authorList>
    </citation>
    <scope>NUCLEOTIDE SEQUENCE [LARGE SCALE GENOMIC DNA]</scope>
    <source>
        <strain>DJO10A</strain>
    </source>
</reference>
<keyword id="KW-0963">Cytoplasm</keyword>
<keyword id="KW-0227">DNA damage</keyword>
<keyword id="KW-0233">DNA recombination</keyword>
<keyword id="KW-0234">DNA repair</keyword>
<keyword id="KW-0238">DNA-binding</keyword>
<keyword id="KW-0255">Endonuclease</keyword>
<keyword id="KW-0378">Hydrolase</keyword>
<keyword id="KW-0460">Magnesium</keyword>
<keyword id="KW-0479">Metal-binding</keyword>
<keyword id="KW-0540">Nuclease</keyword>
<evidence type="ECO:0000255" key="1">
    <source>
        <dbReference type="HAMAP-Rule" id="MF_00034"/>
    </source>
</evidence>
<sequence length="194" mass="20939">MIILGVDPGLTRCGVGVIEAGEHRRLSFIHVDVVRSSPDITQDLRLLAIYNGLSEKMDRFAPDAVSIERVFAQSNRNTVLGTAQAAGLAMLAAAQRNIPVALHTPTEAKLAITGNGQAQKIQVERMVTRILNLTKMPTPADAADALALAICHALRPAGALQGGEREQHLTAAQRQWAEAAQNSTRRRINHDRGM</sequence>
<feature type="chain" id="PRO_1000090502" description="Crossover junction endodeoxyribonuclease RuvC">
    <location>
        <begin position="1"/>
        <end position="194"/>
    </location>
</feature>
<feature type="active site" evidence="1">
    <location>
        <position position="7"/>
    </location>
</feature>
<feature type="active site" evidence="1">
    <location>
        <position position="68"/>
    </location>
</feature>
<feature type="active site" evidence="1">
    <location>
        <position position="141"/>
    </location>
</feature>
<feature type="binding site" evidence="1">
    <location>
        <position position="7"/>
    </location>
    <ligand>
        <name>Mg(2+)</name>
        <dbReference type="ChEBI" id="CHEBI:18420"/>
        <label>1</label>
    </ligand>
</feature>
<feature type="binding site" evidence="1">
    <location>
        <position position="68"/>
    </location>
    <ligand>
        <name>Mg(2+)</name>
        <dbReference type="ChEBI" id="CHEBI:18420"/>
        <label>2</label>
    </ligand>
</feature>
<feature type="binding site" evidence="1">
    <location>
        <position position="141"/>
    </location>
    <ligand>
        <name>Mg(2+)</name>
        <dbReference type="ChEBI" id="CHEBI:18420"/>
        <label>1</label>
    </ligand>
</feature>
<name>RUVC_BIFLD</name>